<sequence length="309" mass="35550">MIDCIYNSDSIFEIKKLDSNSIHAIISDIPYGIDYDDWDILHSNTNSALGGTSSAQHKTSLFKRRGKPLNGWSEADKKRPQEYQEWVESWSNEWFRVLKSGSSVFVFAGRQFAHRVVVAFENSGFTFKDMLSWEKDKAPHRAQRISCVFERRGDIANTNKWVGWRVANLRPLFEPILWFQKPYKTGSTLADNLIKHEVGAWNENSLTHWNIQQGALNHSNILKVRITSEDKGYHVAQKPLNLMKLLIDLVTKEEQIVLDPFAGSGTTLLAAKELNRHFIGYEKNNGIYNIAVNRLGIEKNNCFYNKEKK</sequence>
<dbReference type="EC" id="2.1.1.72"/>
<dbReference type="EMBL" id="L15391">
    <property type="protein sequence ID" value="AAA61959.1"/>
    <property type="molecule type" value="Genomic_DNA"/>
</dbReference>
<dbReference type="EMBL" id="L42023">
    <property type="protein sequence ID" value="AAC23039.1"/>
    <property type="molecule type" value="Genomic_DNA"/>
</dbReference>
<dbReference type="RefSeq" id="NP_439546.1">
    <property type="nucleotide sequence ID" value="NC_000907.1"/>
</dbReference>
<dbReference type="SMR" id="P43871"/>
<dbReference type="STRING" id="71421.HI_1392"/>
<dbReference type="REBASE" id="3428">
    <property type="entry name" value="M.HindIII"/>
</dbReference>
<dbReference type="EnsemblBacteria" id="AAC23039">
    <property type="protein sequence ID" value="AAC23039"/>
    <property type="gene ID" value="HI_1392"/>
</dbReference>
<dbReference type="KEGG" id="hin:HI_1392"/>
<dbReference type="PATRIC" id="fig|71421.8.peg.1451"/>
<dbReference type="eggNOG" id="COG0863">
    <property type="taxonomic scope" value="Bacteria"/>
</dbReference>
<dbReference type="HOGENOM" id="CLU_024927_5_1_6"/>
<dbReference type="OrthoDB" id="9816043at2"/>
<dbReference type="PhylomeDB" id="P43871"/>
<dbReference type="BioCyc" id="HINF71421:G1GJ1-1420-MONOMER"/>
<dbReference type="PRO" id="PR:P43871"/>
<dbReference type="Proteomes" id="UP000000579">
    <property type="component" value="Chromosome"/>
</dbReference>
<dbReference type="GO" id="GO:0003677">
    <property type="term" value="F:DNA binding"/>
    <property type="evidence" value="ECO:0007669"/>
    <property type="project" value="UniProtKB-KW"/>
</dbReference>
<dbReference type="GO" id="GO:0008170">
    <property type="term" value="F:N-methyltransferase activity"/>
    <property type="evidence" value="ECO:0007669"/>
    <property type="project" value="InterPro"/>
</dbReference>
<dbReference type="GO" id="GO:0009007">
    <property type="term" value="F:site-specific DNA-methyltransferase (adenine-specific) activity"/>
    <property type="evidence" value="ECO:0007669"/>
    <property type="project" value="UniProtKB-EC"/>
</dbReference>
<dbReference type="GO" id="GO:0009307">
    <property type="term" value="P:DNA restriction-modification system"/>
    <property type="evidence" value="ECO:0007669"/>
    <property type="project" value="UniProtKB-KW"/>
</dbReference>
<dbReference type="GO" id="GO:0032259">
    <property type="term" value="P:methylation"/>
    <property type="evidence" value="ECO:0007669"/>
    <property type="project" value="UniProtKB-KW"/>
</dbReference>
<dbReference type="Gene3D" id="3.40.50.150">
    <property type="entry name" value="Vaccinia Virus protein VP39"/>
    <property type="match status" value="1"/>
</dbReference>
<dbReference type="InterPro" id="IPR002941">
    <property type="entry name" value="DNA_methylase_N4/N6"/>
</dbReference>
<dbReference type="InterPro" id="IPR001091">
    <property type="entry name" value="RM_Methyltransferase"/>
</dbReference>
<dbReference type="InterPro" id="IPR029063">
    <property type="entry name" value="SAM-dependent_MTases_sf"/>
</dbReference>
<dbReference type="Pfam" id="PF01555">
    <property type="entry name" value="N6_N4_Mtase"/>
    <property type="match status" value="1"/>
</dbReference>
<dbReference type="PRINTS" id="PR00508">
    <property type="entry name" value="S21N4MTFRASE"/>
</dbReference>
<dbReference type="SUPFAM" id="SSF53335">
    <property type="entry name" value="S-adenosyl-L-methionine-dependent methyltransferases"/>
    <property type="match status" value="1"/>
</dbReference>
<proteinExistence type="evidence at protein level"/>
<reference key="1">
    <citation type="journal article" date="1994" name="Gene">
        <title>Cloning, analysis and expression of the HindIII R-M-encoding genes.</title>
        <authorList>
            <person name="Nwankwo D.O."/>
            <person name="Moran L.S."/>
            <person name="Slatko B.E."/>
            <person name="Waite-Rees P.A."/>
            <person name="Dorner L.F."/>
            <person name="Benner J.S."/>
            <person name="Wilson G.G."/>
        </authorList>
    </citation>
    <scope>NUCLEOTIDE SEQUENCE [GENOMIC DNA]</scope>
    <scope>PROTEIN SEQUENCE OF 1-16</scope>
    <scope>FUNCTION</scope>
    <source>
        <strain>ATCC 51907 / DSM 11121 / KW20 / Rd</strain>
    </source>
</reference>
<reference key="2">
    <citation type="journal article" date="1995" name="Science">
        <title>Whole-genome random sequencing and assembly of Haemophilus influenzae Rd.</title>
        <authorList>
            <person name="Fleischmann R.D."/>
            <person name="Adams M.D."/>
            <person name="White O."/>
            <person name="Clayton R.A."/>
            <person name="Kirkness E.F."/>
            <person name="Kerlavage A.R."/>
            <person name="Bult C.J."/>
            <person name="Tomb J.-F."/>
            <person name="Dougherty B.A."/>
            <person name="Merrick J.M."/>
            <person name="McKenney K."/>
            <person name="Sutton G.G."/>
            <person name="FitzHugh W."/>
            <person name="Fields C.A."/>
            <person name="Gocayne J.D."/>
            <person name="Scott J.D."/>
            <person name="Shirley R."/>
            <person name="Liu L.-I."/>
            <person name="Glodek A."/>
            <person name="Kelley J.M."/>
            <person name="Weidman J.F."/>
            <person name="Phillips C.A."/>
            <person name="Spriggs T."/>
            <person name="Hedblom E."/>
            <person name="Cotton M.D."/>
            <person name="Utterback T.R."/>
            <person name="Hanna M.C."/>
            <person name="Nguyen D.T."/>
            <person name="Saudek D.M."/>
            <person name="Brandon R.C."/>
            <person name="Fine L.D."/>
            <person name="Fritchman J.L."/>
            <person name="Fuhrmann J.L."/>
            <person name="Geoghagen N.S.M."/>
            <person name="Gnehm C.L."/>
            <person name="McDonald L.A."/>
            <person name="Small K.V."/>
            <person name="Fraser C.M."/>
            <person name="Smith H.O."/>
            <person name="Venter J.C."/>
        </authorList>
    </citation>
    <scope>NUCLEOTIDE SEQUENCE [LARGE SCALE GENOMIC DNA]</scope>
    <source>
        <strain>ATCC 51907 / DSM 11121 / KW20 / Rd</strain>
    </source>
</reference>
<reference key="3">
    <citation type="journal article" date="2003" name="Nucleic Acids Res.">
        <title>A nomenclature for restriction enzymes, DNA methyltransferases, homing endonucleases and their genes.</title>
        <authorList>
            <person name="Roberts R.J."/>
            <person name="Belfort M."/>
            <person name="Bestor T."/>
            <person name="Bhagwat A.S."/>
            <person name="Bickle T.A."/>
            <person name="Bitinaite J."/>
            <person name="Blumenthal R.M."/>
            <person name="Degtyarev S.K."/>
            <person name="Dryden D.T."/>
            <person name="Dybvig K."/>
            <person name="Firman K."/>
            <person name="Gromova E.S."/>
            <person name="Gumport R.I."/>
            <person name="Halford S.E."/>
            <person name="Hattman S."/>
            <person name="Heitman J."/>
            <person name="Hornby D.P."/>
            <person name="Janulaitis A."/>
            <person name="Jeltsch A."/>
            <person name="Josephsen J."/>
            <person name="Kiss A."/>
            <person name="Klaenhammer T.R."/>
            <person name="Kobayashi I."/>
            <person name="Kong H."/>
            <person name="Krueger D.H."/>
            <person name="Lacks S."/>
            <person name="Marinus M.G."/>
            <person name="Miyahara M."/>
            <person name="Morgan R.D."/>
            <person name="Murray N.E."/>
            <person name="Nagaraja V."/>
            <person name="Piekarowicz A."/>
            <person name="Pingoud A."/>
            <person name="Raleigh E."/>
            <person name="Rao D.N."/>
            <person name="Reich N."/>
            <person name="Repin V.E."/>
            <person name="Selker E.U."/>
            <person name="Shaw P.C."/>
            <person name="Stein D.C."/>
            <person name="Stoddard B.L."/>
            <person name="Szybalski W."/>
            <person name="Trautner T.A."/>
            <person name="Van Etten J.L."/>
            <person name="Vitor J.M."/>
            <person name="Wilson G.G."/>
            <person name="Xu S.Y."/>
        </authorList>
    </citation>
    <scope>NOMENCLATURE</scope>
    <scope>SUBTYPE</scope>
</reference>
<accession>P43871</accession>
<keyword id="KW-0903">Direct protein sequencing</keyword>
<keyword id="KW-0238">DNA-binding</keyword>
<keyword id="KW-0489">Methyltransferase</keyword>
<keyword id="KW-1185">Reference proteome</keyword>
<keyword id="KW-0680">Restriction system</keyword>
<keyword id="KW-0949">S-adenosyl-L-methionine</keyword>
<keyword id="KW-0808">Transferase</keyword>
<evidence type="ECO:0000269" key="1">
    <source>
    </source>
</evidence>
<evidence type="ECO:0000303" key="2">
    <source>
    </source>
</evidence>
<evidence type="ECO:0000303" key="3">
    <source>
    </source>
</evidence>
<evidence type="ECO:0000305" key="4"/>
<protein>
    <recommendedName>
        <fullName evidence="2">Type II methyltransferase M.HindIII</fullName>
        <shortName evidence="3">M.HindIII</shortName>
        <ecNumber>2.1.1.72</ecNumber>
    </recommendedName>
    <alternativeName>
        <fullName>Adenine-specific methyltransferase HindIII</fullName>
    </alternativeName>
    <alternativeName>
        <fullName>Modification methylase HindIII</fullName>
    </alternativeName>
</protein>
<feature type="chain" id="PRO_0000087964" description="Type II methyltransferase M.HindIII">
    <location>
        <begin position="1"/>
        <end position="309"/>
    </location>
</feature>
<gene>
    <name evidence="3" type="primary">hindIIIM</name>
    <name type="ordered locus">HI_1392</name>
</gene>
<name>MTH3_HAEIN</name>
<organism>
    <name type="scientific">Haemophilus influenzae (strain ATCC 51907 / DSM 11121 / KW20 / Rd)</name>
    <dbReference type="NCBI Taxonomy" id="71421"/>
    <lineage>
        <taxon>Bacteria</taxon>
        <taxon>Pseudomonadati</taxon>
        <taxon>Pseudomonadota</taxon>
        <taxon>Gammaproteobacteria</taxon>
        <taxon>Pasteurellales</taxon>
        <taxon>Pasteurellaceae</taxon>
        <taxon>Haemophilus</taxon>
    </lineage>
</organism>
<comment type="function">
    <text evidence="1 2">A beta subtype methylase that recognizes the double-stranded sequence 5'-AAGCTT-3', methylates A-1 on both strands, and protects the DNA from cleavage by the HindIII endonuclease.</text>
</comment>
<comment type="catalytic activity">
    <reaction>
        <text>a 2'-deoxyadenosine in DNA + S-adenosyl-L-methionine = an N(6)-methyl-2'-deoxyadenosine in DNA + S-adenosyl-L-homocysteine + H(+)</text>
        <dbReference type="Rhea" id="RHEA:15197"/>
        <dbReference type="Rhea" id="RHEA-COMP:12418"/>
        <dbReference type="Rhea" id="RHEA-COMP:12419"/>
        <dbReference type="ChEBI" id="CHEBI:15378"/>
        <dbReference type="ChEBI" id="CHEBI:57856"/>
        <dbReference type="ChEBI" id="CHEBI:59789"/>
        <dbReference type="ChEBI" id="CHEBI:90615"/>
        <dbReference type="ChEBI" id="CHEBI:90616"/>
        <dbReference type="EC" id="2.1.1.72"/>
    </reaction>
</comment>
<comment type="similarity">
    <text evidence="4">Belongs to the N(4)/N(6)-methyltransferase family.</text>
</comment>